<proteinExistence type="inferred from homology"/>
<organism>
    <name type="scientific">Staphylococcus aureus (strain COL)</name>
    <dbReference type="NCBI Taxonomy" id="93062"/>
    <lineage>
        <taxon>Bacteria</taxon>
        <taxon>Bacillati</taxon>
        <taxon>Bacillota</taxon>
        <taxon>Bacilli</taxon>
        <taxon>Bacillales</taxon>
        <taxon>Staphylococcaceae</taxon>
        <taxon>Staphylococcus</taxon>
    </lineage>
</organism>
<protein>
    <recommendedName>
        <fullName evidence="1">Urease accessory protein UreE</fullName>
    </recommendedName>
</protein>
<sequence>MIVEEIQGNIANLSNSEKQKHVEKVYLENSDLVKRIQRVVTDHGTEIGIRLKQPIDLQYGDILYADDHNMIIVDVNSEDLLVIQPRTLQEMGDIAHQLGNRHLPAQFTETEMLVQYDYLVEDLLKSLGIPYVREDRKVNKAFRHIGHSHD</sequence>
<comment type="function">
    <text evidence="1">Involved in urease metallocenter assembly. Binds nickel. Probably functions as a nickel donor during metallocenter assembly.</text>
</comment>
<comment type="subcellular location">
    <subcellularLocation>
        <location evidence="1">Cytoplasm</location>
    </subcellularLocation>
</comment>
<comment type="similarity">
    <text evidence="1">Belongs to the UreE family.</text>
</comment>
<reference key="1">
    <citation type="journal article" date="2005" name="J. Bacteriol.">
        <title>Insights on evolution of virulence and resistance from the complete genome analysis of an early methicillin-resistant Staphylococcus aureus strain and a biofilm-producing methicillin-resistant Staphylococcus epidermidis strain.</title>
        <authorList>
            <person name="Gill S.R."/>
            <person name="Fouts D.E."/>
            <person name="Archer G.L."/>
            <person name="Mongodin E.F."/>
            <person name="DeBoy R.T."/>
            <person name="Ravel J."/>
            <person name="Paulsen I.T."/>
            <person name="Kolonay J.F."/>
            <person name="Brinkac L.M."/>
            <person name="Beanan M.J."/>
            <person name="Dodson R.J."/>
            <person name="Daugherty S.C."/>
            <person name="Madupu R."/>
            <person name="Angiuoli S.V."/>
            <person name="Durkin A.S."/>
            <person name="Haft D.H."/>
            <person name="Vamathevan J.J."/>
            <person name="Khouri H."/>
            <person name="Utterback T.R."/>
            <person name="Lee C."/>
            <person name="Dimitrov G."/>
            <person name="Jiang L."/>
            <person name="Qin H."/>
            <person name="Weidman J."/>
            <person name="Tran K."/>
            <person name="Kang K.H."/>
            <person name="Hance I.R."/>
            <person name="Nelson K.E."/>
            <person name="Fraser C.M."/>
        </authorList>
    </citation>
    <scope>NUCLEOTIDE SEQUENCE [LARGE SCALE GENOMIC DNA]</scope>
    <source>
        <strain>COL</strain>
    </source>
</reference>
<accession>Q5HDR7</accession>
<evidence type="ECO:0000255" key="1">
    <source>
        <dbReference type="HAMAP-Rule" id="MF_00822"/>
    </source>
</evidence>
<gene>
    <name evidence="1" type="primary">ureE</name>
    <name type="ordered locus">SACOL2283</name>
</gene>
<dbReference type="EMBL" id="CP000046">
    <property type="protein sequence ID" value="AAW38503.1"/>
    <property type="molecule type" value="Genomic_DNA"/>
</dbReference>
<dbReference type="RefSeq" id="WP_000634589.1">
    <property type="nucleotide sequence ID" value="NZ_JBGOFO010000004.1"/>
</dbReference>
<dbReference type="SMR" id="Q5HDR7"/>
<dbReference type="KEGG" id="sac:SACOL2283"/>
<dbReference type="HOGENOM" id="CLU_093757_3_1_9"/>
<dbReference type="Proteomes" id="UP000000530">
    <property type="component" value="Chromosome"/>
</dbReference>
<dbReference type="GO" id="GO:0005737">
    <property type="term" value="C:cytoplasm"/>
    <property type="evidence" value="ECO:0007669"/>
    <property type="project" value="UniProtKB-SubCell"/>
</dbReference>
<dbReference type="GO" id="GO:0016151">
    <property type="term" value="F:nickel cation binding"/>
    <property type="evidence" value="ECO:0007669"/>
    <property type="project" value="UniProtKB-UniRule"/>
</dbReference>
<dbReference type="GO" id="GO:0051082">
    <property type="term" value="F:unfolded protein binding"/>
    <property type="evidence" value="ECO:0007669"/>
    <property type="project" value="UniProtKB-UniRule"/>
</dbReference>
<dbReference type="GO" id="GO:0006457">
    <property type="term" value="P:protein folding"/>
    <property type="evidence" value="ECO:0007669"/>
    <property type="project" value="InterPro"/>
</dbReference>
<dbReference type="GO" id="GO:0065003">
    <property type="term" value="P:protein-containing complex assembly"/>
    <property type="evidence" value="ECO:0007669"/>
    <property type="project" value="InterPro"/>
</dbReference>
<dbReference type="GO" id="GO:0019627">
    <property type="term" value="P:urea metabolic process"/>
    <property type="evidence" value="ECO:0007669"/>
    <property type="project" value="InterPro"/>
</dbReference>
<dbReference type="CDD" id="cd00571">
    <property type="entry name" value="UreE"/>
    <property type="match status" value="1"/>
</dbReference>
<dbReference type="Gene3D" id="2.60.260.20">
    <property type="entry name" value="Urease metallochaperone UreE, N-terminal domain"/>
    <property type="match status" value="1"/>
</dbReference>
<dbReference type="Gene3D" id="3.30.70.790">
    <property type="entry name" value="UreE, C-terminal domain"/>
    <property type="match status" value="1"/>
</dbReference>
<dbReference type="HAMAP" id="MF_00822">
    <property type="entry name" value="UreE"/>
    <property type="match status" value="1"/>
</dbReference>
<dbReference type="InterPro" id="IPR012406">
    <property type="entry name" value="UreE"/>
</dbReference>
<dbReference type="InterPro" id="IPR007864">
    <property type="entry name" value="UreE_C_dom"/>
</dbReference>
<dbReference type="InterPro" id="IPR004029">
    <property type="entry name" value="UreE_N"/>
</dbReference>
<dbReference type="InterPro" id="IPR036118">
    <property type="entry name" value="UreE_N_sf"/>
</dbReference>
<dbReference type="NCBIfam" id="NF009755">
    <property type="entry name" value="PRK13261.2-1"/>
    <property type="match status" value="1"/>
</dbReference>
<dbReference type="Pfam" id="PF05194">
    <property type="entry name" value="UreE_C"/>
    <property type="match status" value="1"/>
</dbReference>
<dbReference type="Pfam" id="PF02814">
    <property type="entry name" value="UreE_N"/>
    <property type="match status" value="1"/>
</dbReference>
<dbReference type="PIRSF" id="PIRSF036402">
    <property type="entry name" value="Ureas_acces_UreE"/>
    <property type="match status" value="1"/>
</dbReference>
<dbReference type="SMART" id="SM00988">
    <property type="entry name" value="UreE_N"/>
    <property type="match status" value="1"/>
</dbReference>
<dbReference type="SUPFAM" id="SSF69737">
    <property type="entry name" value="Urease metallochaperone UreE, C-terminal domain"/>
    <property type="match status" value="1"/>
</dbReference>
<dbReference type="SUPFAM" id="SSF69287">
    <property type="entry name" value="Urease metallochaperone UreE, N-terminal domain"/>
    <property type="match status" value="1"/>
</dbReference>
<name>UREE_STAAC</name>
<feature type="chain" id="PRO_0000223437" description="Urease accessory protein UreE">
    <location>
        <begin position="1"/>
        <end position="150"/>
    </location>
</feature>
<keyword id="KW-0143">Chaperone</keyword>
<keyword id="KW-0963">Cytoplasm</keyword>
<keyword id="KW-0533">Nickel</keyword>
<keyword id="KW-0996">Nickel insertion</keyword>